<reference key="1">
    <citation type="submission" date="2007-06" db="EMBL/GenBank/DDBJ databases">
        <authorList>
            <person name="Brinkac L.M."/>
            <person name="Daugherty S."/>
            <person name="Dodson R.J."/>
            <person name="Madupu R."/>
            <person name="Brown J.L."/>
            <person name="Bruce D."/>
            <person name="Detter C."/>
            <person name="Munk C."/>
            <person name="Smith L.A."/>
            <person name="Smith T.J."/>
            <person name="White O."/>
            <person name="Brettin T.S."/>
        </authorList>
    </citation>
    <scope>NUCLEOTIDE SEQUENCE [LARGE SCALE GENOMIC DNA]</scope>
    <source>
        <strain>Langeland / NCTC 10281 / Type F</strain>
    </source>
</reference>
<evidence type="ECO:0000255" key="1">
    <source>
        <dbReference type="HAMAP-Rule" id="MF_00184"/>
    </source>
</evidence>
<evidence type="ECO:0000255" key="2">
    <source>
        <dbReference type="PROSITE-ProRule" id="PRU01228"/>
    </source>
</evidence>
<feature type="chain" id="PRO_1000020371" description="Threonine--tRNA ligase">
    <location>
        <begin position="1"/>
        <end position="635"/>
    </location>
</feature>
<feature type="domain" description="TGS" evidence="2">
    <location>
        <begin position="1"/>
        <end position="61"/>
    </location>
</feature>
<feature type="region of interest" description="Catalytic" evidence="1">
    <location>
        <begin position="242"/>
        <end position="532"/>
    </location>
</feature>
<feature type="binding site" evidence="1">
    <location>
        <position position="333"/>
    </location>
    <ligand>
        <name>Zn(2+)</name>
        <dbReference type="ChEBI" id="CHEBI:29105"/>
    </ligand>
</feature>
<feature type="binding site" evidence="1">
    <location>
        <position position="384"/>
    </location>
    <ligand>
        <name>Zn(2+)</name>
        <dbReference type="ChEBI" id="CHEBI:29105"/>
    </ligand>
</feature>
<feature type="binding site" evidence="1">
    <location>
        <position position="509"/>
    </location>
    <ligand>
        <name>Zn(2+)</name>
        <dbReference type="ChEBI" id="CHEBI:29105"/>
    </ligand>
</feature>
<dbReference type="EC" id="6.1.1.3" evidence="1"/>
<dbReference type="EMBL" id="CP000728">
    <property type="protein sequence ID" value="ABS39452.1"/>
    <property type="molecule type" value="Genomic_DNA"/>
</dbReference>
<dbReference type="RefSeq" id="WP_012100841.1">
    <property type="nucleotide sequence ID" value="NC_009699.1"/>
</dbReference>
<dbReference type="SMR" id="A7GI05"/>
<dbReference type="KEGG" id="cbf:CLI_3196"/>
<dbReference type="HOGENOM" id="CLU_008554_0_1_9"/>
<dbReference type="Proteomes" id="UP000002410">
    <property type="component" value="Chromosome"/>
</dbReference>
<dbReference type="GO" id="GO:0005737">
    <property type="term" value="C:cytoplasm"/>
    <property type="evidence" value="ECO:0007669"/>
    <property type="project" value="UniProtKB-SubCell"/>
</dbReference>
<dbReference type="GO" id="GO:0005524">
    <property type="term" value="F:ATP binding"/>
    <property type="evidence" value="ECO:0007669"/>
    <property type="project" value="UniProtKB-UniRule"/>
</dbReference>
<dbReference type="GO" id="GO:0140096">
    <property type="term" value="F:catalytic activity, acting on a protein"/>
    <property type="evidence" value="ECO:0007669"/>
    <property type="project" value="UniProtKB-ARBA"/>
</dbReference>
<dbReference type="GO" id="GO:0046872">
    <property type="term" value="F:metal ion binding"/>
    <property type="evidence" value="ECO:0007669"/>
    <property type="project" value="UniProtKB-KW"/>
</dbReference>
<dbReference type="GO" id="GO:0004829">
    <property type="term" value="F:threonine-tRNA ligase activity"/>
    <property type="evidence" value="ECO:0007669"/>
    <property type="project" value="UniProtKB-UniRule"/>
</dbReference>
<dbReference type="GO" id="GO:0016740">
    <property type="term" value="F:transferase activity"/>
    <property type="evidence" value="ECO:0007669"/>
    <property type="project" value="UniProtKB-ARBA"/>
</dbReference>
<dbReference type="GO" id="GO:0000049">
    <property type="term" value="F:tRNA binding"/>
    <property type="evidence" value="ECO:0007669"/>
    <property type="project" value="UniProtKB-KW"/>
</dbReference>
<dbReference type="GO" id="GO:0006435">
    <property type="term" value="P:threonyl-tRNA aminoacylation"/>
    <property type="evidence" value="ECO:0007669"/>
    <property type="project" value="UniProtKB-UniRule"/>
</dbReference>
<dbReference type="CDD" id="cd01667">
    <property type="entry name" value="TGS_ThrRS"/>
    <property type="match status" value="1"/>
</dbReference>
<dbReference type="CDD" id="cd00860">
    <property type="entry name" value="ThrRS_anticodon"/>
    <property type="match status" value="1"/>
</dbReference>
<dbReference type="CDD" id="cd00771">
    <property type="entry name" value="ThrRS_core"/>
    <property type="match status" value="1"/>
</dbReference>
<dbReference type="FunFam" id="3.10.20.30:FF:000005">
    <property type="entry name" value="Threonine--tRNA ligase"/>
    <property type="match status" value="1"/>
</dbReference>
<dbReference type="FunFam" id="3.30.54.20:FF:000002">
    <property type="entry name" value="Threonine--tRNA ligase"/>
    <property type="match status" value="1"/>
</dbReference>
<dbReference type="FunFam" id="3.30.930.10:FF:000002">
    <property type="entry name" value="Threonine--tRNA ligase"/>
    <property type="match status" value="1"/>
</dbReference>
<dbReference type="FunFam" id="3.40.50.800:FF:000001">
    <property type="entry name" value="Threonine--tRNA ligase"/>
    <property type="match status" value="1"/>
</dbReference>
<dbReference type="FunFam" id="3.30.980.10:FF:000005">
    <property type="entry name" value="Threonyl-tRNA synthetase, mitochondrial"/>
    <property type="match status" value="1"/>
</dbReference>
<dbReference type="Gene3D" id="3.10.20.30">
    <property type="match status" value="1"/>
</dbReference>
<dbReference type="Gene3D" id="3.30.54.20">
    <property type="match status" value="1"/>
</dbReference>
<dbReference type="Gene3D" id="3.40.50.800">
    <property type="entry name" value="Anticodon-binding domain"/>
    <property type="match status" value="1"/>
</dbReference>
<dbReference type="Gene3D" id="3.30.930.10">
    <property type="entry name" value="Bira Bifunctional Protein, Domain 2"/>
    <property type="match status" value="1"/>
</dbReference>
<dbReference type="Gene3D" id="3.30.980.10">
    <property type="entry name" value="Threonyl-trna Synthetase, Chain A, domain 2"/>
    <property type="match status" value="1"/>
</dbReference>
<dbReference type="HAMAP" id="MF_00184">
    <property type="entry name" value="Thr_tRNA_synth"/>
    <property type="match status" value="1"/>
</dbReference>
<dbReference type="InterPro" id="IPR002314">
    <property type="entry name" value="aa-tRNA-synt_IIb"/>
</dbReference>
<dbReference type="InterPro" id="IPR006195">
    <property type="entry name" value="aa-tRNA-synth_II"/>
</dbReference>
<dbReference type="InterPro" id="IPR045864">
    <property type="entry name" value="aa-tRNA-synth_II/BPL/LPL"/>
</dbReference>
<dbReference type="InterPro" id="IPR004154">
    <property type="entry name" value="Anticodon-bd"/>
</dbReference>
<dbReference type="InterPro" id="IPR036621">
    <property type="entry name" value="Anticodon-bd_dom_sf"/>
</dbReference>
<dbReference type="InterPro" id="IPR012675">
    <property type="entry name" value="Beta-grasp_dom_sf"/>
</dbReference>
<dbReference type="InterPro" id="IPR004095">
    <property type="entry name" value="TGS"/>
</dbReference>
<dbReference type="InterPro" id="IPR012676">
    <property type="entry name" value="TGS-like"/>
</dbReference>
<dbReference type="InterPro" id="IPR002320">
    <property type="entry name" value="Thr-tRNA-ligase_IIa"/>
</dbReference>
<dbReference type="InterPro" id="IPR018163">
    <property type="entry name" value="Thr/Ala-tRNA-synth_IIc_edit"/>
</dbReference>
<dbReference type="InterPro" id="IPR047246">
    <property type="entry name" value="ThrRS_anticodon"/>
</dbReference>
<dbReference type="InterPro" id="IPR033728">
    <property type="entry name" value="ThrRS_core"/>
</dbReference>
<dbReference type="InterPro" id="IPR012947">
    <property type="entry name" value="tRNA_SAD"/>
</dbReference>
<dbReference type="NCBIfam" id="TIGR00418">
    <property type="entry name" value="thrS"/>
    <property type="match status" value="1"/>
</dbReference>
<dbReference type="PANTHER" id="PTHR11451:SF44">
    <property type="entry name" value="THREONINE--TRNA LIGASE, CHLOROPLASTIC_MITOCHONDRIAL 2"/>
    <property type="match status" value="1"/>
</dbReference>
<dbReference type="PANTHER" id="PTHR11451">
    <property type="entry name" value="THREONINE-TRNA LIGASE"/>
    <property type="match status" value="1"/>
</dbReference>
<dbReference type="Pfam" id="PF03129">
    <property type="entry name" value="HGTP_anticodon"/>
    <property type="match status" value="1"/>
</dbReference>
<dbReference type="Pfam" id="PF02824">
    <property type="entry name" value="TGS"/>
    <property type="match status" value="1"/>
</dbReference>
<dbReference type="Pfam" id="PF00587">
    <property type="entry name" value="tRNA-synt_2b"/>
    <property type="match status" value="1"/>
</dbReference>
<dbReference type="Pfam" id="PF07973">
    <property type="entry name" value="tRNA_SAD"/>
    <property type="match status" value="1"/>
</dbReference>
<dbReference type="PRINTS" id="PR01047">
    <property type="entry name" value="TRNASYNTHTHR"/>
</dbReference>
<dbReference type="SMART" id="SM00863">
    <property type="entry name" value="tRNA_SAD"/>
    <property type="match status" value="1"/>
</dbReference>
<dbReference type="SUPFAM" id="SSF52954">
    <property type="entry name" value="Class II aaRS ABD-related"/>
    <property type="match status" value="1"/>
</dbReference>
<dbReference type="SUPFAM" id="SSF55681">
    <property type="entry name" value="Class II aaRS and biotin synthetases"/>
    <property type="match status" value="1"/>
</dbReference>
<dbReference type="SUPFAM" id="SSF81271">
    <property type="entry name" value="TGS-like"/>
    <property type="match status" value="1"/>
</dbReference>
<dbReference type="SUPFAM" id="SSF55186">
    <property type="entry name" value="ThrRS/AlaRS common domain"/>
    <property type="match status" value="1"/>
</dbReference>
<dbReference type="PROSITE" id="PS50862">
    <property type="entry name" value="AA_TRNA_LIGASE_II"/>
    <property type="match status" value="1"/>
</dbReference>
<dbReference type="PROSITE" id="PS51880">
    <property type="entry name" value="TGS"/>
    <property type="match status" value="1"/>
</dbReference>
<keyword id="KW-0030">Aminoacyl-tRNA synthetase</keyword>
<keyword id="KW-0067">ATP-binding</keyword>
<keyword id="KW-0963">Cytoplasm</keyword>
<keyword id="KW-0436">Ligase</keyword>
<keyword id="KW-0479">Metal-binding</keyword>
<keyword id="KW-0547">Nucleotide-binding</keyword>
<keyword id="KW-0648">Protein biosynthesis</keyword>
<keyword id="KW-0694">RNA-binding</keyword>
<keyword id="KW-0820">tRNA-binding</keyword>
<keyword id="KW-0862">Zinc</keyword>
<proteinExistence type="inferred from homology"/>
<name>SYT_CLOBL</name>
<protein>
    <recommendedName>
        <fullName evidence="1">Threonine--tRNA ligase</fullName>
        <ecNumber evidence="1">6.1.1.3</ecNumber>
    </recommendedName>
    <alternativeName>
        <fullName evidence="1">Threonyl-tRNA synthetase</fullName>
        <shortName evidence="1">ThrRS</shortName>
    </alternativeName>
</protein>
<comment type="function">
    <text evidence="1">Catalyzes the attachment of threonine to tRNA(Thr) in a two-step reaction: L-threonine is first activated by ATP to form Thr-AMP and then transferred to the acceptor end of tRNA(Thr). Also edits incorrectly charged L-seryl-tRNA(Thr).</text>
</comment>
<comment type="catalytic activity">
    <reaction evidence="1">
        <text>tRNA(Thr) + L-threonine + ATP = L-threonyl-tRNA(Thr) + AMP + diphosphate + H(+)</text>
        <dbReference type="Rhea" id="RHEA:24624"/>
        <dbReference type="Rhea" id="RHEA-COMP:9670"/>
        <dbReference type="Rhea" id="RHEA-COMP:9704"/>
        <dbReference type="ChEBI" id="CHEBI:15378"/>
        <dbReference type="ChEBI" id="CHEBI:30616"/>
        <dbReference type="ChEBI" id="CHEBI:33019"/>
        <dbReference type="ChEBI" id="CHEBI:57926"/>
        <dbReference type="ChEBI" id="CHEBI:78442"/>
        <dbReference type="ChEBI" id="CHEBI:78534"/>
        <dbReference type="ChEBI" id="CHEBI:456215"/>
        <dbReference type="EC" id="6.1.1.3"/>
    </reaction>
</comment>
<comment type="cofactor">
    <cofactor evidence="1">
        <name>Zn(2+)</name>
        <dbReference type="ChEBI" id="CHEBI:29105"/>
    </cofactor>
    <text evidence="1">Binds 1 zinc ion per subunit.</text>
</comment>
<comment type="subunit">
    <text evidence="1">Homodimer.</text>
</comment>
<comment type="subcellular location">
    <subcellularLocation>
        <location evidence="1">Cytoplasm</location>
    </subcellularLocation>
</comment>
<comment type="similarity">
    <text evidence="1">Belongs to the class-II aminoacyl-tRNA synthetase family.</text>
</comment>
<sequence length="635" mass="73284">MIKITLKDGKVMEIEEGIKISDIAMKISPALYKKALAAKIDGETVDLMTELHKDSSLEILTFEDEMGKWALRHTGAHILAQAVKRLYPEVKLAIGPAIDTGFYYDFEADFTFTPEMLEKIEAEIKKIIKENHKLERFELPREEAINLMKEKNEDYKVELIEDLPEGEVISFYKQGDFTDLCAGPHVPSTGKVKSVKLLSLAGAYWRGDEKNKMLQRIYGTAFTKKSELDEYLNMIEEAKKRDHRKLGKELDLFSIHEEGPGFPFFHPKGMIVRNILESFWREKHTKAGYQEIRTPLILNEALWHQSGHWDHYKENMYFTNIDDGDYAIKPMNCPGGILVYKSSMHSYRDLPLRLSELGIVHRHELSGALHGLMRVRCFTQDDAHLYMTKEQIKEEVIGIIKLIDEFYKLFGFEYFVELSTRPEDSMGSDEDWEIATNGLREALDSIGKEYRVNEGDGAFYGPKIDFHLKDCIGRTWQCGTIQLDFQMPERFDLSYIGADGEKHRPVMVHRTIYGSVERFIGILIEQYAGAFPTWLAPVQVKLMNITDSQYDYLKKVEETLKENNIRVEIDTRNEKIGYKIREAQLQKVPYMLILGDKEVEAGKVAVRSRKDGDLGAISLEEFIEKIKNEIKNKTN</sequence>
<organism>
    <name type="scientific">Clostridium botulinum (strain Langeland / NCTC 10281 / Type F)</name>
    <dbReference type="NCBI Taxonomy" id="441772"/>
    <lineage>
        <taxon>Bacteria</taxon>
        <taxon>Bacillati</taxon>
        <taxon>Bacillota</taxon>
        <taxon>Clostridia</taxon>
        <taxon>Eubacteriales</taxon>
        <taxon>Clostridiaceae</taxon>
        <taxon>Clostridium</taxon>
    </lineage>
</organism>
<accession>A7GI05</accession>
<gene>
    <name evidence="1" type="primary">thrS</name>
    <name type="ordered locus">CLI_3196</name>
</gene>